<name>Y566_MYCPN</name>
<reference key="1">
    <citation type="journal article" date="1996" name="Nucleic Acids Res.">
        <title>Complete sequence analysis of the genome of the bacterium Mycoplasma pneumoniae.</title>
        <authorList>
            <person name="Himmelreich R."/>
            <person name="Hilbert H."/>
            <person name="Plagens H."/>
            <person name="Pirkl E."/>
            <person name="Li B.-C."/>
            <person name="Herrmann R."/>
        </authorList>
    </citation>
    <scope>NUCLEOTIDE SEQUENCE [LARGE SCALE GENOMIC DNA]</scope>
    <source>
        <strain>ATCC 29342 / M129 / Subtype 1</strain>
    </source>
</reference>
<protein>
    <recommendedName>
        <fullName>Uncharacterized protein MG385 homolog</fullName>
    </recommendedName>
</protein>
<sequence>MRKQFLIAHRGYSTIAPENTHLAFAAAQLFGFDGLWMEVQLTKDKQIVVTNLDNYKVGNKTHKLSDINLVNLKKINLAKQFKVNVQEQTILTLKEVLMEFLTPFRFLLLFIKGEEEQQNQVLVEQLAQLLEGFELAKEKLILLSSHFSTIKYLNEKLKSFKTSFVFNSKKQLVHLTKDEITQNCRFLAPNDSFYHKNCAELQSYGLPIILWVIKGLLRYQFYENDRFVKFQIAAQLY</sequence>
<proteinExistence type="predicted"/>
<gene>
    <name type="ordered locus">MPN_566</name>
    <name type="ORF">H03_orf237</name>
    <name type="ORF">MP276</name>
</gene>
<organism>
    <name type="scientific">Mycoplasma pneumoniae (strain ATCC 29342 / M129 / Subtype 1)</name>
    <name type="common">Mycoplasmoides pneumoniae</name>
    <dbReference type="NCBI Taxonomy" id="272634"/>
    <lineage>
        <taxon>Bacteria</taxon>
        <taxon>Bacillati</taxon>
        <taxon>Mycoplasmatota</taxon>
        <taxon>Mycoplasmoidales</taxon>
        <taxon>Mycoplasmoidaceae</taxon>
        <taxon>Mycoplasmoides</taxon>
    </lineage>
</organism>
<evidence type="ECO:0000305" key="1"/>
<keyword id="KW-0378">Hydrolase</keyword>
<keyword id="KW-1185">Reference proteome</keyword>
<comment type="similarity">
    <text evidence="1">To glycerophosphoryl diester phosphodiesterases (EC 3.1.4.46).</text>
</comment>
<comment type="similarity">
    <text evidence="1">To M.genitalium MG293.</text>
</comment>
<accession>P75212</accession>
<dbReference type="EMBL" id="U00089">
    <property type="protein sequence ID" value="AAB95924.1"/>
    <property type="molecule type" value="Genomic_DNA"/>
</dbReference>
<dbReference type="PIR" id="S73602">
    <property type="entry name" value="S73602"/>
</dbReference>
<dbReference type="RefSeq" id="NP_110255.1">
    <property type="nucleotide sequence ID" value="NC_000912.1"/>
</dbReference>
<dbReference type="RefSeq" id="WP_010874923.1">
    <property type="nucleotide sequence ID" value="NZ_OU342337.1"/>
</dbReference>
<dbReference type="SMR" id="P75212"/>
<dbReference type="STRING" id="272634.MPN_566"/>
<dbReference type="EnsemblBacteria" id="AAB95924">
    <property type="protein sequence ID" value="AAB95924"/>
    <property type="gene ID" value="MPN_566"/>
</dbReference>
<dbReference type="KEGG" id="mpn:MPN_566"/>
<dbReference type="PATRIC" id="fig|272634.6.peg.628"/>
<dbReference type="HOGENOM" id="CLU_030006_3_3_14"/>
<dbReference type="OrthoDB" id="384721at2"/>
<dbReference type="BioCyc" id="MPNE272634:G1GJ3-928-MONOMER"/>
<dbReference type="Proteomes" id="UP000000808">
    <property type="component" value="Chromosome"/>
</dbReference>
<dbReference type="GO" id="GO:0008081">
    <property type="term" value="F:phosphoric diester hydrolase activity"/>
    <property type="evidence" value="ECO:0007669"/>
    <property type="project" value="InterPro"/>
</dbReference>
<dbReference type="GO" id="GO:0006629">
    <property type="term" value="P:lipid metabolic process"/>
    <property type="evidence" value="ECO:0007669"/>
    <property type="project" value="InterPro"/>
</dbReference>
<dbReference type="Gene3D" id="3.20.20.190">
    <property type="entry name" value="Phosphatidylinositol (PI) phosphodiesterase"/>
    <property type="match status" value="1"/>
</dbReference>
<dbReference type="InterPro" id="IPR030395">
    <property type="entry name" value="GP_PDE_dom"/>
</dbReference>
<dbReference type="InterPro" id="IPR017946">
    <property type="entry name" value="PLC-like_Pdiesterase_TIM-brl"/>
</dbReference>
<dbReference type="PANTHER" id="PTHR46211:SF1">
    <property type="entry name" value="GLYCEROPHOSPHODIESTER PHOSPHODIESTERASE, CYTOPLASMIC"/>
    <property type="match status" value="1"/>
</dbReference>
<dbReference type="PANTHER" id="PTHR46211">
    <property type="entry name" value="GLYCEROPHOSPHORYL DIESTER PHOSPHODIESTERASE"/>
    <property type="match status" value="1"/>
</dbReference>
<dbReference type="Pfam" id="PF03009">
    <property type="entry name" value="GDPD"/>
    <property type="match status" value="1"/>
</dbReference>
<dbReference type="SUPFAM" id="SSF51695">
    <property type="entry name" value="PLC-like phosphodiesterases"/>
    <property type="match status" value="1"/>
</dbReference>
<dbReference type="PROSITE" id="PS51704">
    <property type="entry name" value="GP_PDE"/>
    <property type="match status" value="1"/>
</dbReference>
<feature type="chain" id="PRO_0000210587" description="Uncharacterized protein MG385 homolog">
    <location>
        <begin position="1"/>
        <end position="237"/>
    </location>
</feature>
<feature type="domain" description="GP-PDE">
    <location>
        <begin position="4"/>
        <end position="237"/>
    </location>
</feature>